<organism>
    <name type="scientific">Enterobacteria phage P4</name>
    <name type="common">Bacteriophage P4</name>
    <dbReference type="NCBI Taxonomy" id="10680"/>
    <lineage>
        <taxon>Viruses</taxon>
        <taxon>Duplodnaviria</taxon>
        <taxon>Heunggongvirae</taxon>
        <taxon>Uroviricota</taxon>
        <taxon>Caudoviricetes</taxon>
    </lineage>
</organism>
<organismHost>
    <name type="scientific">Escherichia coli</name>
    <dbReference type="NCBI Taxonomy" id="562"/>
</organismHost>
<evidence type="ECO:0000256" key="1">
    <source>
        <dbReference type="SAM" id="MobiDB-lite"/>
    </source>
</evidence>
<reference key="1">
    <citation type="journal article" date="1984" name="Nucleic Acids Res.">
        <title>Nucleotide sequence of the essential region of bacteriophage P4.</title>
        <authorList>
            <person name="Lin C.-S."/>
        </authorList>
    </citation>
    <scope>NUCLEOTIDE SEQUENCE [GENOMIC DNA]</scope>
</reference>
<reference key="2">
    <citation type="journal article" date="1990" name="Nucleic Acids Res.">
        <title>DNA sequence of satellite bacteriophage P4.</title>
        <authorList>
            <person name="Halling C."/>
            <person name="Calendar R."/>
            <person name="Christie G.E."/>
            <person name="Dale E.C."/>
            <person name="Deho G."/>
            <person name="Finkel S."/>
            <person name="Flensburg J."/>
            <person name="Ghisotti D."/>
            <person name="Kahn M.L."/>
            <person name="Lane K.B."/>
            <person name="Lin C.-S."/>
            <person name="Lindqvist B.H."/>
            <person name="Pierson L.S."/>
            <person name="Six E.W."/>
            <person name="Sunshine M.G."/>
            <person name="Ziermann R."/>
        </authorList>
    </citation>
    <scope>NUCLEOTIDE SEQUENCE [LARGE SCALE GENOMIC DNA]</scope>
</reference>
<sequence length="151" mass="17726">MFDFPQPGEIYRSAGFPDVAVVGILEDGIPWEMPYRCPDIVWNPYRRKFSILVRILADGRTTDIPLGRFLREFTCDRPDLFKRSPVNRHAVLKEMAGDPELQKWREKYLDIYPQDTVPVSRAAPVAREWREIPRTEPDPETTPDNSYRNYL</sequence>
<accession>P68664</accession>
<accession>P05464</accession>
<keyword id="KW-0244">Early protein</keyword>
<keyword id="KW-1185">Reference proteome</keyword>
<dbReference type="EMBL" id="X02534">
    <property type="protein sequence ID" value="CAA26380.1"/>
    <property type="molecule type" value="Genomic_DNA"/>
</dbReference>
<dbReference type="EMBL" id="X51522">
    <property type="protein sequence ID" value="CAA35900.1"/>
    <property type="molecule type" value="Genomic_DNA"/>
</dbReference>
<dbReference type="RefSeq" id="NP_042038.1">
    <property type="nucleotide sequence ID" value="NC_001609.1"/>
</dbReference>
<dbReference type="SMR" id="P68664"/>
<dbReference type="GeneID" id="1261086"/>
<dbReference type="KEGG" id="vg:1261086"/>
<dbReference type="Proteomes" id="UP000009093">
    <property type="component" value="Genome"/>
</dbReference>
<feature type="chain" id="PRO_0000165236" description="Uncharacterized protein ORF151">
    <location>
        <begin position="1"/>
        <end position="151"/>
    </location>
</feature>
<feature type="region of interest" description="Disordered" evidence="1">
    <location>
        <begin position="130"/>
        <end position="151"/>
    </location>
</feature>
<name>YQ54_BPP4</name>
<proteinExistence type="predicted"/>
<protein>
    <recommendedName>
        <fullName>Uncharacterized protein ORF151</fullName>
    </recommendedName>
</protein>